<sequence>MRTEVAKKETVNHQWFVVDAENVVLGRLATQVANVLRGKHKPMYTPSVDTGDFVVIVNAEKIALTGNKMADKVYYSHSGFPGGIKSSTAAAMLSKKPEELIRKAVKGMLPKNKLARHMLKKLKVYSGGAHPHEAQQPAQLSL</sequence>
<protein>
    <recommendedName>
        <fullName evidence="1">Large ribosomal subunit protein uL13</fullName>
    </recommendedName>
    <alternativeName>
        <fullName evidence="2">50S ribosomal protein L13</fullName>
    </alternativeName>
</protein>
<dbReference type="EMBL" id="CP001089">
    <property type="protein sequence ID" value="ACD96897.1"/>
    <property type="molecule type" value="Genomic_DNA"/>
</dbReference>
<dbReference type="RefSeq" id="WP_012471221.1">
    <property type="nucleotide sequence ID" value="NC_010814.1"/>
</dbReference>
<dbReference type="SMR" id="B3EA22"/>
<dbReference type="STRING" id="398767.Glov_3191"/>
<dbReference type="KEGG" id="glo:Glov_3191"/>
<dbReference type="eggNOG" id="COG0102">
    <property type="taxonomic scope" value="Bacteria"/>
</dbReference>
<dbReference type="HOGENOM" id="CLU_082184_2_2_7"/>
<dbReference type="OrthoDB" id="9801330at2"/>
<dbReference type="Proteomes" id="UP000002420">
    <property type="component" value="Chromosome"/>
</dbReference>
<dbReference type="GO" id="GO:0022625">
    <property type="term" value="C:cytosolic large ribosomal subunit"/>
    <property type="evidence" value="ECO:0007669"/>
    <property type="project" value="TreeGrafter"/>
</dbReference>
<dbReference type="GO" id="GO:0003729">
    <property type="term" value="F:mRNA binding"/>
    <property type="evidence" value="ECO:0007669"/>
    <property type="project" value="TreeGrafter"/>
</dbReference>
<dbReference type="GO" id="GO:0003735">
    <property type="term" value="F:structural constituent of ribosome"/>
    <property type="evidence" value="ECO:0007669"/>
    <property type="project" value="InterPro"/>
</dbReference>
<dbReference type="GO" id="GO:0017148">
    <property type="term" value="P:negative regulation of translation"/>
    <property type="evidence" value="ECO:0007669"/>
    <property type="project" value="TreeGrafter"/>
</dbReference>
<dbReference type="GO" id="GO:0006412">
    <property type="term" value="P:translation"/>
    <property type="evidence" value="ECO:0007669"/>
    <property type="project" value="UniProtKB-UniRule"/>
</dbReference>
<dbReference type="CDD" id="cd00392">
    <property type="entry name" value="Ribosomal_L13"/>
    <property type="match status" value="1"/>
</dbReference>
<dbReference type="FunFam" id="3.90.1180.10:FF:000001">
    <property type="entry name" value="50S ribosomal protein L13"/>
    <property type="match status" value="1"/>
</dbReference>
<dbReference type="Gene3D" id="3.90.1180.10">
    <property type="entry name" value="Ribosomal protein L13"/>
    <property type="match status" value="1"/>
</dbReference>
<dbReference type="HAMAP" id="MF_01366">
    <property type="entry name" value="Ribosomal_uL13"/>
    <property type="match status" value="1"/>
</dbReference>
<dbReference type="InterPro" id="IPR005822">
    <property type="entry name" value="Ribosomal_uL13"/>
</dbReference>
<dbReference type="InterPro" id="IPR005823">
    <property type="entry name" value="Ribosomal_uL13_bac-type"/>
</dbReference>
<dbReference type="InterPro" id="IPR036899">
    <property type="entry name" value="Ribosomal_uL13_sf"/>
</dbReference>
<dbReference type="NCBIfam" id="TIGR01066">
    <property type="entry name" value="rplM_bact"/>
    <property type="match status" value="1"/>
</dbReference>
<dbReference type="PANTHER" id="PTHR11545:SF2">
    <property type="entry name" value="LARGE RIBOSOMAL SUBUNIT PROTEIN UL13M"/>
    <property type="match status" value="1"/>
</dbReference>
<dbReference type="PANTHER" id="PTHR11545">
    <property type="entry name" value="RIBOSOMAL PROTEIN L13"/>
    <property type="match status" value="1"/>
</dbReference>
<dbReference type="Pfam" id="PF00572">
    <property type="entry name" value="Ribosomal_L13"/>
    <property type="match status" value="1"/>
</dbReference>
<dbReference type="PIRSF" id="PIRSF002181">
    <property type="entry name" value="Ribosomal_L13"/>
    <property type="match status" value="1"/>
</dbReference>
<dbReference type="SUPFAM" id="SSF52161">
    <property type="entry name" value="Ribosomal protein L13"/>
    <property type="match status" value="1"/>
</dbReference>
<keyword id="KW-1185">Reference proteome</keyword>
<keyword id="KW-0687">Ribonucleoprotein</keyword>
<keyword id="KW-0689">Ribosomal protein</keyword>
<accession>B3EA22</accession>
<proteinExistence type="inferred from homology"/>
<reference key="1">
    <citation type="submission" date="2008-05" db="EMBL/GenBank/DDBJ databases">
        <title>Complete sequence of chromosome of Geobacter lovleyi SZ.</title>
        <authorList>
            <consortium name="US DOE Joint Genome Institute"/>
            <person name="Lucas S."/>
            <person name="Copeland A."/>
            <person name="Lapidus A."/>
            <person name="Glavina del Rio T."/>
            <person name="Dalin E."/>
            <person name="Tice H."/>
            <person name="Bruce D."/>
            <person name="Goodwin L."/>
            <person name="Pitluck S."/>
            <person name="Chertkov O."/>
            <person name="Meincke L."/>
            <person name="Brettin T."/>
            <person name="Detter J.C."/>
            <person name="Han C."/>
            <person name="Tapia R."/>
            <person name="Kuske C.R."/>
            <person name="Schmutz J."/>
            <person name="Larimer F."/>
            <person name="Land M."/>
            <person name="Hauser L."/>
            <person name="Kyrpides N."/>
            <person name="Mikhailova N."/>
            <person name="Sung Y."/>
            <person name="Fletcher K.E."/>
            <person name="Ritalahti K.M."/>
            <person name="Loeffler F.E."/>
            <person name="Richardson P."/>
        </authorList>
    </citation>
    <scope>NUCLEOTIDE SEQUENCE [LARGE SCALE GENOMIC DNA]</scope>
    <source>
        <strain>ATCC BAA-1151 / DSM 17278 / SZ</strain>
    </source>
</reference>
<gene>
    <name evidence="1" type="primary">rplM</name>
    <name type="ordered locus">Glov_3191</name>
</gene>
<name>RL13_TRIL1</name>
<evidence type="ECO:0000255" key="1">
    <source>
        <dbReference type="HAMAP-Rule" id="MF_01366"/>
    </source>
</evidence>
<evidence type="ECO:0000305" key="2"/>
<comment type="function">
    <text evidence="1">This protein is one of the early assembly proteins of the 50S ribosomal subunit, although it is not seen to bind rRNA by itself. It is important during the early stages of 50S assembly.</text>
</comment>
<comment type="subunit">
    <text evidence="1">Part of the 50S ribosomal subunit.</text>
</comment>
<comment type="similarity">
    <text evidence="1">Belongs to the universal ribosomal protein uL13 family.</text>
</comment>
<feature type="chain" id="PRO_1000144135" description="Large ribosomal subunit protein uL13">
    <location>
        <begin position="1"/>
        <end position="142"/>
    </location>
</feature>
<organism>
    <name type="scientific">Trichlorobacter lovleyi (strain ATCC BAA-1151 / DSM 17278 / SZ)</name>
    <name type="common">Geobacter lovleyi</name>
    <dbReference type="NCBI Taxonomy" id="398767"/>
    <lineage>
        <taxon>Bacteria</taxon>
        <taxon>Pseudomonadati</taxon>
        <taxon>Thermodesulfobacteriota</taxon>
        <taxon>Desulfuromonadia</taxon>
        <taxon>Geobacterales</taxon>
        <taxon>Geobacteraceae</taxon>
        <taxon>Trichlorobacter</taxon>
    </lineage>
</organism>